<keyword id="KW-0002">3D-structure</keyword>
<keyword id="KW-0009">Actin-binding</keyword>
<keyword id="KW-0025">Alternative splicing</keyword>
<keyword id="KW-1003">Cell membrane</keyword>
<keyword id="KW-0966">Cell projection</keyword>
<keyword id="KW-0969">Cilium</keyword>
<keyword id="KW-0970">Cilium biogenesis/degradation</keyword>
<keyword id="KW-0963">Cytoplasm</keyword>
<keyword id="KW-0206">Cytoskeleton</keyword>
<keyword id="KW-0282">Flagellum</keyword>
<keyword id="KW-0472">Membrane</keyword>
<keyword id="KW-0493">Microtubule</keyword>
<keyword id="KW-1267">Proteomics identification</keyword>
<keyword id="KW-1185">Reference proteome</keyword>
<accession>Q9Y4P9</accession>
<accession>A5YM71</accession>
<accession>D3DVY0</accession>
<accession>Q5JX78</accession>
<protein>
    <recommendedName>
        <fullName>Sperm flagellar protein 1</fullName>
    </recommendedName>
</protein>
<name>SPEF1_HUMAN</name>
<gene>
    <name type="primary">SPEF1</name>
    <name type="synonym">C20orf28</name>
</gene>
<proteinExistence type="evidence at protein level"/>
<comment type="function">
    <text evidence="1 2 5">Microtubule-associated protein involved in the stabilization of microtubules along the axis of migration during radial intercalation. Promotes the establishment and stabilization of an axis of microtubules required for the active migration of cells into the outer epithelium (By similarity). Microtubule-associated protein that promotes microtubule bundling and stabilizes microtubules against depolymerization in response to cold shock (By similarity). Essential for ciliary central apparatus formation which requires both its microtubule-binding and bundling activities and for ciliary localization of HYDIN and SPAG6 in ependymal cilia (By similarity). Binds actin in intestinal epithelial cells (IECs), essential for IECs survival and contributes to formation of filopodia and lamellipodia in migrating IECs (PubMed:31473225). Regulates planar cell polarity signaling pathway and asymmetric microtubule accumulation in ciliated epithelia (By similarity).</text>
</comment>
<comment type="subunit">
    <text evidence="2 5">Homodimer (By similarity). Interacts with actin, TJP1, CGN and CDH1 (PubMed:31473225).</text>
</comment>
<comment type="interaction">
    <interactant intactId="EBI-740053">
        <id>Q9Y4P9</id>
    </interactant>
    <interactant intactId="EBI-10171697">
        <id>Q6A162</id>
        <label>KRT40</label>
    </interactant>
    <organismsDiffer>false</organismsDiffer>
    <experiments>3</experiments>
</comment>
<comment type="interaction">
    <interactant intactId="EBI-12303571">
        <id>Q9Y4P9-2</id>
    </interactant>
    <interactant intactId="EBI-3867333">
        <id>A8MQ03</id>
        <label>CYSRT1</label>
    </interactant>
    <organismsDiffer>false</organismsDiffer>
    <experiments>3</experiments>
</comment>
<comment type="interaction">
    <interactant intactId="EBI-12303571">
        <id>Q9Y4P9-2</id>
    </interactant>
    <interactant intactId="EBI-11953846">
        <id>Q52LG2</id>
        <label>KRTAP13-2</label>
    </interactant>
    <organismsDiffer>false</organismsDiffer>
    <experiments>3</experiments>
</comment>
<comment type="interaction">
    <interactant intactId="EBI-12303571">
        <id>Q9Y4P9-2</id>
    </interactant>
    <interactant intactId="EBI-742388">
        <id>Q9H8W4</id>
        <label>PLEKHF2</label>
    </interactant>
    <organismsDiffer>false</organismsDiffer>
    <experiments>3</experiments>
</comment>
<comment type="subcellular location">
    <subcellularLocation>
        <location evidence="5">Cytoplasm</location>
    </subcellularLocation>
    <subcellularLocation>
        <location evidence="2">Cell projection</location>
        <location evidence="2">Cilium</location>
        <location evidence="2">Flagellum</location>
    </subcellularLocation>
    <subcellularLocation>
        <location evidence="1">Cytoplasm</location>
        <location evidence="1">Cytoskeleton</location>
        <location evidence="1">Cilium axoneme</location>
    </subcellularLocation>
    <subcellularLocation>
        <location evidence="5">Apical cell membrane</location>
    </subcellularLocation>
    <subcellularLocation>
        <location evidence="5">Basolateral cell membrane</location>
    </subcellularLocation>
    <subcellularLocation>
        <location evidence="5">Cytoplasm</location>
        <location evidence="5">Cytoskeleton</location>
        <location evidence="5">Stress fiber</location>
    </subcellularLocation>
    <subcellularLocation>
        <location evidence="5">Cell projection</location>
        <location evidence="5">Microvillus</location>
    </subcellularLocation>
    <subcellularLocation>
        <location evidence="5">Cell projection</location>
        <location evidence="5">Lamellipodium</location>
    </subcellularLocation>
    <subcellularLocation>
        <location evidence="5">Cell projection</location>
        <location evidence="5">Filopodium</location>
    </subcellularLocation>
    <text evidence="1 5">Present in the tails of developing and epididymal sperm, internal to the fibrous sheath and around the outer dense fibers of the sperm flagellum. Also found at the apical tip of cilia (By similarity). Colocalizes with TJP1 and CGN at sites of cell-cell contact in intestinal epithelial cells (PubMed:31473225).</text>
</comment>
<comment type="alternative products">
    <event type="alternative splicing"/>
    <isoform>
        <id>Q9Y4P9-1</id>
        <name>1</name>
        <sequence type="displayed"/>
    </isoform>
    <isoform>
        <id>Q9Y4P9-2</id>
        <name>2</name>
        <sequence type="described" ref="VSP_017219 VSP_017220"/>
    </isoform>
</comment>
<comment type="tissue specificity">
    <text evidence="5">Expressed in the intestinal epithelial cells (at protein level).</text>
</comment>
<comment type="domain">
    <text evidence="2">The Calponin-homology domain mediates its binding to microtubules.</text>
</comment>
<comment type="miscellaneous">
    <text evidence="1">Radial intercalation is a developmentally reiterated form of migration by which cells move in a direction orthogonal to the plane of the tissue from an inner layer to an outer layer.</text>
</comment>
<feature type="chain" id="PRO_0000079421" description="Sperm flagellar protein 1">
    <location>
        <begin position="1"/>
        <end position="236"/>
    </location>
</feature>
<feature type="domain" description="Calponin-homology (CH)" evidence="3">
    <location>
        <begin position="7"/>
        <end position="112"/>
    </location>
</feature>
<feature type="region of interest" description="Disordered" evidence="4">
    <location>
        <begin position="115"/>
        <end position="176"/>
    </location>
</feature>
<feature type="region of interest" description="Essential for homodimerization and microtubule bundling activity" evidence="2">
    <location>
        <begin position="183"/>
        <end position="236"/>
    </location>
</feature>
<feature type="splice variant" id="VSP_017219" description="In isoform 2." evidence="6 7">
    <original>VSQKARGEGVPDPQGGGQLSWD</original>
    <variation>KVAFSISPSRLELSFCPSSCHL</variation>
    <location>
        <begin position="141"/>
        <end position="162"/>
    </location>
</feature>
<feature type="splice variant" id="VSP_017220" description="In isoform 2." evidence="6 7">
    <location>
        <begin position="163"/>
        <end position="236"/>
    </location>
</feature>
<feature type="helix" evidence="8">
    <location>
        <begin position="7"/>
        <end position="19"/>
    </location>
</feature>
<feature type="helix" evidence="8">
    <location>
        <begin position="29"/>
        <end position="33"/>
    </location>
</feature>
<feature type="helix" evidence="8">
    <location>
        <begin position="37"/>
        <end position="46"/>
    </location>
</feature>
<feature type="turn" evidence="8">
    <location>
        <begin position="48"/>
        <end position="50"/>
    </location>
</feature>
<feature type="helix" evidence="8">
    <location>
        <begin position="62"/>
        <end position="75"/>
    </location>
</feature>
<feature type="helix" evidence="8">
    <location>
        <begin position="78"/>
        <end position="80"/>
    </location>
</feature>
<feature type="helix" evidence="8">
    <location>
        <begin position="86"/>
        <end position="93"/>
    </location>
</feature>
<feature type="turn" evidence="8">
    <location>
        <begin position="97"/>
        <end position="100"/>
    </location>
</feature>
<feature type="helix" evidence="8">
    <location>
        <begin position="101"/>
        <end position="116"/>
    </location>
</feature>
<evidence type="ECO:0000250" key="1">
    <source>
        <dbReference type="UniProtKB" id="Q0IH24"/>
    </source>
</evidence>
<evidence type="ECO:0000250" key="2">
    <source>
        <dbReference type="UniProtKB" id="Q99JL1"/>
    </source>
</evidence>
<evidence type="ECO:0000255" key="3">
    <source>
        <dbReference type="PROSITE-ProRule" id="PRU00044"/>
    </source>
</evidence>
<evidence type="ECO:0000256" key="4">
    <source>
        <dbReference type="SAM" id="MobiDB-lite"/>
    </source>
</evidence>
<evidence type="ECO:0000269" key="5">
    <source>
    </source>
</evidence>
<evidence type="ECO:0000303" key="6">
    <source>
    </source>
</evidence>
<evidence type="ECO:0000303" key="7">
    <source>
    </source>
</evidence>
<evidence type="ECO:0007829" key="8">
    <source>
        <dbReference type="PDB" id="2EE7"/>
    </source>
</evidence>
<sequence>MASSVDEEALHQLYLWVDNIPLSRPKRNLSRDFSDGVLVAEVIKFYFPKMVEMHNYVPANSLQQKLSNWGHLNRKVLKRLNFSVPDDVMRKIAQCAPGVVELVLIPLRQRLEERQRRRKQGAGSLQELAPQDGSGYMDVGVSQKARGEGVPDPQGGGQLSWDRPPAPRPPAYNRALQGDPSFVLQIAEKEQELLASQETVQVLQMKVRRLEHLLQLKNVRIEDLSRRLQQAERKQR</sequence>
<dbReference type="EMBL" id="AL080154">
    <property type="protein sequence ID" value="CAB45745.1"/>
    <property type="molecule type" value="mRNA"/>
</dbReference>
<dbReference type="EMBL" id="EF560745">
    <property type="protein sequence ID" value="ABQ59055.1"/>
    <property type="molecule type" value="mRNA"/>
</dbReference>
<dbReference type="EMBL" id="AL109804">
    <property type="status" value="NOT_ANNOTATED_CDS"/>
    <property type="molecule type" value="Genomic_DNA"/>
</dbReference>
<dbReference type="EMBL" id="CH471133">
    <property type="protein sequence ID" value="EAX10503.1"/>
    <property type="molecule type" value="Genomic_DNA"/>
</dbReference>
<dbReference type="EMBL" id="CH471133">
    <property type="protein sequence ID" value="EAX10504.1"/>
    <property type="molecule type" value="Genomic_DNA"/>
</dbReference>
<dbReference type="EMBL" id="CH471133">
    <property type="protein sequence ID" value="EAX10505.1"/>
    <property type="molecule type" value="Genomic_DNA"/>
</dbReference>
<dbReference type="EMBL" id="BC022476">
    <property type="protein sequence ID" value="AAH22476.1"/>
    <property type="molecule type" value="mRNA"/>
</dbReference>
<dbReference type="CCDS" id="CCDS13063.2">
    <molecule id="Q9Y4P9-1"/>
</dbReference>
<dbReference type="PIR" id="T12538">
    <property type="entry name" value="T12538"/>
</dbReference>
<dbReference type="RefSeq" id="NP_056232.2">
    <molecule id="Q9Y4P9-1"/>
    <property type="nucleotide sequence ID" value="NM_015417.5"/>
</dbReference>
<dbReference type="PDB" id="2EE7">
    <property type="method" value="NMR"/>
    <property type="chains" value="A=1-120"/>
</dbReference>
<dbReference type="PDBsum" id="2EE7"/>
<dbReference type="BMRB" id="Q9Y4P9"/>
<dbReference type="SMR" id="Q9Y4P9"/>
<dbReference type="BioGRID" id="117391">
    <property type="interactions" value="8"/>
</dbReference>
<dbReference type="FunCoup" id="Q9Y4P9">
    <property type="interactions" value="60"/>
</dbReference>
<dbReference type="IntAct" id="Q9Y4P9">
    <property type="interactions" value="9"/>
</dbReference>
<dbReference type="MINT" id="Q9Y4P9"/>
<dbReference type="STRING" id="9606.ENSP00000369080"/>
<dbReference type="PhosphoSitePlus" id="Q9Y4P9"/>
<dbReference type="BioMuta" id="SPEF1"/>
<dbReference type="DMDM" id="152031688"/>
<dbReference type="MassIVE" id="Q9Y4P9"/>
<dbReference type="PaxDb" id="9606-ENSP00000369080"/>
<dbReference type="PeptideAtlas" id="Q9Y4P9"/>
<dbReference type="ProteomicsDB" id="86242">
    <molecule id="Q9Y4P9-1"/>
</dbReference>
<dbReference type="ProteomicsDB" id="86243">
    <molecule id="Q9Y4P9-2"/>
</dbReference>
<dbReference type="Antibodypedia" id="62787">
    <property type="antibodies" value="16 antibodies from 10 providers"/>
</dbReference>
<dbReference type="DNASU" id="25876"/>
<dbReference type="Ensembl" id="ENST00000379756.3">
    <molecule id="Q9Y4P9-1"/>
    <property type="protein sequence ID" value="ENSP00000369080.3"/>
    <property type="gene ID" value="ENSG00000101222.12"/>
</dbReference>
<dbReference type="GeneID" id="25876"/>
<dbReference type="KEGG" id="hsa:25876"/>
<dbReference type="MANE-Select" id="ENST00000379756.3">
    <property type="protein sequence ID" value="ENSP00000369080.3"/>
    <property type="RefSeq nucleotide sequence ID" value="NM_015417.5"/>
    <property type="RefSeq protein sequence ID" value="NP_056232.2"/>
</dbReference>
<dbReference type="UCSC" id="uc002wjj.4">
    <molecule id="Q9Y4P9-1"/>
    <property type="organism name" value="human"/>
</dbReference>
<dbReference type="AGR" id="HGNC:15874"/>
<dbReference type="CTD" id="25876"/>
<dbReference type="GeneCards" id="SPEF1"/>
<dbReference type="HGNC" id="HGNC:15874">
    <property type="gene designation" value="SPEF1"/>
</dbReference>
<dbReference type="HPA" id="ENSG00000101222">
    <property type="expression patterns" value="Group enriched (brain, choroid plexus, fallopian tube, testis)"/>
</dbReference>
<dbReference type="MIM" id="610674">
    <property type="type" value="gene"/>
</dbReference>
<dbReference type="neXtProt" id="NX_Q9Y4P9"/>
<dbReference type="OpenTargets" id="ENSG00000101222"/>
<dbReference type="PharmGKB" id="PA162404432"/>
<dbReference type="VEuPathDB" id="HostDB:ENSG00000101222"/>
<dbReference type="eggNOG" id="ENOG502QRJA">
    <property type="taxonomic scope" value="Eukaryota"/>
</dbReference>
<dbReference type="GeneTree" id="ENSGT00910000144159"/>
<dbReference type="HOGENOM" id="CLU_069635_0_0_1"/>
<dbReference type="InParanoid" id="Q9Y4P9"/>
<dbReference type="OMA" id="KLDNWNT"/>
<dbReference type="OrthoDB" id="193300at2759"/>
<dbReference type="PAN-GO" id="Q9Y4P9">
    <property type="GO annotations" value="3 GO annotations based on evolutionary models"/>
</dbReference>
<dbReference type="PhylomeDB" id="Q9Y4P9"/>
<dbReference type="TreeFam" id="TF323506"/>
<dbReference type="PathwayCommons" id="Q9Y4P9"/>
<dbReference type="SignaLink" id="Q9Y4P9"/>
<dbReference type="BioGRID-ORCS" id="25876">
    <property type="hits" value="17 hits in 1147 CRISPR screens"/>
</dbReference>
<dbReference type="EvolutionaryTrace" id="Q9Y4P9"/>
<dbReference type="GeneWiki" id="SPEF1"/>
<dbReference type="GenomeRNAi" id="25876"/>
<dbReference type="Pharos" id="Q9Y4P9">
    <property type="development level" value="Tdark"/>
</dbReference>
<dbReference type="PRO" id="PR:Q9Y4P9"/>
<dbReference type="Proteomes" id="UP000005640">
    <property type="component" value="Chromosome 20"/>
</dbReference>
<dbReference type="RNAct" id="Q9Y4P9">
    <property type="molecule type" value="protein"/>
</dbReference>
<dbReference type="Bgee" id="ENSG00000101222">
    <property type="expression patterns" value="Expressed in right uterine tube and 119 other cell types or tissues"/>
</dbReference>
<dbReference type="GO" id="GO:0097729">
    <property type="term" value="C:9+2 motile cilium"/>
    <property type="evidence" value="ECO:0000250"/>
    <property type="project" value="UniProtKB"/>
</dbReference>
<dbReference type="GO" id="GO:0016324">
    <property type="term" value="C:apical plasma membrane"/>
    <property type="evidence" value="ECO:0000314"/>
    <property type="project" value="UniProtKB"/>
</dbReference>
<dbReference type="GO" id="GO:1990716">
    <property type="term" value="C:axonemal central apparatus"/>
    <property type="evidence" value="ECO:0000250"/>
    <property type="project" value="UniProtKB"/>
</dbReference>
<dbReference type="GO" id="GO:0005930">
    <property type="term" value="C:axoneme"/>
    <property type="evidence" value="ECO:0000250"/>
    <property type="project" value="UniProtKB"/>
</dbReference>
<dbReference type="GO" id="GO:0016323">
    <property type="term" value="C:basolateral plasma membrane"/>
    <property type="evidence" value="ECO:0000314"/>
    <property type="project" value="UniProtKB"/>
</dbReference>
<dbReference type="GO" id="GO:0097542">
    <property type="term" value="C:ciliary tip"/>
    <property type="evidence" value="ECO:0000250"/>
    <property type="project" value="UniProtKB"/>
</dbReference>
<dbReference type="GO" id="GO:0005737">
    <property type="term" value="C:cytoplasm"/>
    <property type="evidence" value="ECO:0000314"/>
    <property type="project" value="UniProtKB"/>
</dbReference>
<dbReference type="GO" id="GO:0030175">
    <property type="term" value="C:filopodium"/>
    <property type="evidence" value="ECO:0000314"/>
    <property type="project" value="UniProtKB"/>
</dbReference>
<dbReference type="GO" id="GO:0030027">
    <property type="term" value="C:lamellipodium"/>
    <property type="evidence" value="ECO:0000314"/>
    <property type="project" value="UniProtKB"/>
</dbReference>
<dbReference type="GO" id="GO:0005874">
    <property type="term" value="C:microtubule"/>
    <property type="evidence" value="ECO:0000314"/>
    <property type="project" value="UniProtKB"/>
</dbReference>
<dbReference type="GO" id="GO:0005902">
    <property type="term" value="C:microvillus"/>
    <property type="evidence" value="ECO:0000314"/>
    <property type="project" value="UniProtKB"/>
</dbReference>
<dbReference type="GO" id="GO:0001725">
    <property type="term" value="C:stress fiber"/>
    <property type="evidence" value="ECO:0007669"/>
    <property type="project" value="UniProtKB-SubCell"/>
</dbReference>
<dbReference type="GO" id="GO:0003779">
    <property type="term" value="F:actin binding"/>
    <property type="evidence" value="ECO:0000314"/>
    <property type="project" value="UniProtKB"/>
</dbReference>
<dbReference type="GO" id="GO:0008017">
    <property type="term" value="F:microtubule binding"/>
    <property type="evidence" value="ECO:0000250"/>
    <property type="project" value="UniProtKB"/>
</dbReference>
<dbReference type="GO" id="GO:1904158">
    <property type="term" value="P:axonemal central apparatus assembly"/>
    <property type="evidence" value="ECO:0000250"/>
    <property type="project" value="UniProtKB"/>
</dbReference>
<dbReference type="GO" id="GO:0016477">
    <property type="term" value="P:cell migration"/>
    <property type="evidence" value="ECO:0000250"/>
    <property type="project" value="UniProtKB"/>
</dbReference>
<dbReference type="GO" id="GO:0003341">
    <property type="term" value="P:cilium movement"/>
    <property type="evidence" value="ECO:0000250"/>
    <property type="project" value="UniProtKB"/>
</dbReference>
<dbReference type="GO" id="GO:0046847">
    <property type="term" value="P:filopodium assembly"/>
    <property type="evidence" value="ECO:0000315"/>
    <property type="project" value="UniProtKB"/>
</dbReference>
<dbReference type="GO" id="GO:0030032">
    <property type="term" value="P:lamellipodium assembly"/>
    <property type="evidence" value="ECO:0000315"/>
    <property type="project" value="UniProtKB"/>
</dbReference>
<dbReference type="GO" id="GO:0001578">
    <property type="term" value="P:microtubule bundle formation"/>
    <property type="evidence" value="ECO:0000250"/>
    <property type="project" value="UniProtKB"/>
</dbReference>
<dbReference type="GO" id="GO:0007026">
    <property type="term" value="P:negative regulation of microtubule depolymerization"/>
    <property type="evidence" value="ECO:0000250"/>
    <property type="project" value="UniProtKB"/>
</dbReference>
<dbReference type="GO" id="GO:0051493">
    <property type="term" value="P:regulation of cytoskeleton organization"/>
    <property type="evidence" value="ECO:0000318"/>
    <property type="project" value="GO_Central"/>
</dbReference>
<dbReference type="GO" id="GO:2000095">
    <property type="term" value="P:regulation of Wnt signaling pathway, planar cell polarity pathway"/>
    <property type="evidence" value="ECO:0000250"/>
    <property type="project" value="UniProtKB"/>
</dbReference>
<dbReference type="FunFam" id="1.10.418.10:FF:000060">
    <property type="entry name" value="Sperm flagellar protein 1"/>
    <property type="match status" value="1"/>
</dbReference>
<dbReference type="Gene3D" id="1.10.418.10">
    <property type="entry name" value="Calponin-like domain"/>
    <property type="match status" value="1"/>
</dbReference>
<dbReference type="InterPro" id="IPR010441">
    <property type="entry name" value="CH_2"/>
</dbReference>
<dbReference type="InterPro" id="IPR001715">
    <property type="entry name" value="CH_dom"/>
</dbReference>
<dbReference type="InterPro" id="IPR036872">
    <property type="entry name" value="CH_dom_sf"/>
</dbReference>
<dbReference type="InterPro" id="IPR052111">
    <property type="entry name" value="Spermatogenesis_Ciliary_MAP"/>
</dbReference>
<dbReference type="PANTHER" id="PTHR12509:SF16">
    <property type="entry name" value="SPERM FLAGELLAR PROTEIN 1"/>
    <property type="match status" value="1"/>
</dbReference>
<dbReference type="PANTHER" id="PTHR12509">
    <property type="entry name" value="SPERMATOGENESIS-ASSOCIATED 4-RELATED"/>
    <property type="match status" value="1"/>
</dbReference>
<dbReference type="Pfam" id="PF06294">
    <property type="entry name" value="CH_2"/>
    <property type="match status" value="1"/>
</dbReference>
<dbReference type="SUPFAM" id="SSF47576">
    <property type="entry name" value="Calponin-homology domain, CH-domain"/>
    <property type="match status" value="1"/>
</dbReference>
<dbReference type="PROSITE" id="PS50021">
    <property type="entry name" value="CH"/>
    <property type="match status" value="1"/>
</dbReference>
<reference key="1">
    <citation type="journal article" date="2001" name="Genome Res.">
        <title>Towards a catalog of human genes and proteins: sequencing and analysis of 500 novel complete protein coding human cDNAs.</title>
        <authorList>
            <person name="Wiemann S."/>
            <person name="Weil B."/>
            <person name="Wellenreuther R."/>
            <person name="Gassenhuber J."/>
            <person name="Glassl S."/>
            <person name="Ansorge W."/>
            <person name="Boecher M."/>
            <person name="Bloecker H."/>
            <person name="Bauersachs S."/>
            <person name="Blum H."/>
            <person name="Lauber J."/>
            <person name="Duesterhoeft A."/>
            <person name="Beyer A."/>
            <person name="Koehrer K."/>
            <person name="Strack N."/>
            <person name="Mewes H.-W."/>
            <person name="Ottenwaelder B."/>
            <person name="Obermaier B."/>
            <person name="Tampe J."/>
            <person name="Heubner D."/>
            <person name="Wambutt R."/>
            <person name="Korn B."/>
            <person name="Klein M."/>
            <person name="Poustka A."/>
        </authorList>
    </citation>
    <scope>NUCLEOTIDE SEQUENCE [LARGE SCALE MRNA] (ISOFORM 2)</scope>
    <source>
        <tissue>Testis</tissue>
    </source>
</reference>
<reference key="2">
    <citation type="journal article" date="2007" name="BMC Genomics">
        <title>The full-ORF clone resource of the German cDNA consortium.</title>
        <authorList>
            <person name="Bechtel S."/>
            <person name="Rosenfelder H."/>
            <person name="Duda A."/>
            <person name="Schmidt C.P."/>
            <person name="Ernst U."/>
            <person name="Wellenreuther R."/>
            <person name="Mehrle A."/>
            <person name="Schuster C."/>
            <person name="Bahr A."/>
            <person name="Bloecker H."/>
            <person name="Heubner D."/>
            <person name="Hoerlein A."/>
            <person name="Michel G."/>
            <person name="Wedler H."/>
            <person name="Koehrer K."/>
            <person name="Ottenwaelder B."/>
            <person name="Poustka A."/>
            <person name="Wiemann S."/>
            <person name="Schupp I."/>
        </authorList>
    </citation>
    <scope>NUCLEOTIDE SEQUENCE [LARGE SCALE MRNA] (ISOFORM 1)</scope>
</reference>
<reference key="3">
    <citation type="journal article" date="2001" name="Nature">
        <title>The DNA sequence and comparative analysis of human chromosome 20.</title>
        <authorList>
            <person name="Deloukas P."/>
            <person name="Matthews L.H."/>
            <person name="Ashurst J.L."/>
            <person name="Burton J."/>
            <person name="Gilbert J.G.R."/>
            <person name="Jones M."/>
            <person name="Stavrides G."/>
            <person name="Almeida J.P."/>
            <person name="Babbage A.K."/>
            <person name="Bagguley C.L."/>
            <person name="Bailey J."/>
            <person name="Barlow K.F."/>
            <person name="Bates K.N."/>
            <person name="Beard L.M."/>
            <person name="Beare D.M."/>
            <person name="Beasley O.P."/>
            <person name="Bird C.P."/>
            <person name="Blakey S.E."/>
            <person name="Bridgeman A.M."/>
            <person name="Brown A.J."/>
            <person name="Buck D."/>
            <person name="Burrill W.D."/>
            <person name="Butler A.P."/>
            <person name="Carder C."/>
            <person name="Carter N.P."/>
            <person name="Chapman J.C."/>
            <person name="Clamp M."/>
            <person name="Clark G."/>
            <person name="Clark L.N."/>
            <person name="Clark S.Y."/>
            <person name="Clee C.M."/>
            <person name="Clegg S."/>
            <person name="Cobley V.E."/>
            <person name="Collier R.E."/>
            <person name="Connor R.E."/>
            <person name="Corby N.R."/>
            <person name="Coulson A."/>
            <person name="Coville G.J."/>
            <person name="Deadman R."/>
            <person name="Dhami P.D."/>
            <person name="Dunn M."/>
            <person name="Ellington A.G."/>
            <person name="Frankland J.A."/>
            <person name="Fraser A."/>
            <person name="French L."/>
            <person name="Garner P."/>
            <person name="Grafham D.V."/>
            <person name="Griffiths C."/>
            <person name="Griffiths M.N.D."/>
            <person name="Gwilliam R."/>
            <person name="Hall R.E."/>
            <person name="Hammond S."/>
            <person name="Harley J.L."/>
            <person name="Heath P.D."/>
            <person name="Ho S."/>
            <person name="Holden J.L."/>
            <person name="Howden P.J."/>
            <person name="Huckle E."/>
            <person name="Hunt A.R."/>
            <person name="Hunt S.E."/>
            <person name="Jekosch K."/>
            <person name="Johnson C.M."/>
            <person name="Johnson D."/>
            <person name="Kay M.P."/>
            <person name="Kimberley A.M."/>
            <person name="King A."/>
            <person name="Knights A."/>
            <person name="Laird G.K."/>
            <person name="Lawlor S."/>
            <person name="Lehvaeslaiho M.H."/>
            <person name="Leversha M.A."/>
            <person name="Lloyd C."/>
            <person name="Lloyd D.M."/>
            <person name="Lovell J.D."/>
            <person name="Marsh V.L."/>
            <person name="Martin S.L."/>
            <person name="McConnachie L.J."/>
            <person name="McLay K."/>
            <person name="McMurray A.A."/>
            <person name="Milne S.A."/>
            <person name="Mistry D."/>
            <person name="Moore M.J.F."/>
            <person name="Mullikin J.C."/>
            <person name="Nickerson T."/>
            <person name="Oliver K."/>
            <person name="Parker A."/>
            <person name="Patel R."/>
            <person name="Pearce T.A.V."/>
            <person name="Peck A.I."/>
            <person name="Phillimore B.J.C.T."/>
            <person name="Prathalingam S.R."/>
            <person name="Plumb R.W."/>
            <person name="Ramsay H."/>
            <person name="Rice C.M."/>
            <person name="Ross M.T."/>
            <person name="Scott C.E."/>
            <person name="Sehra H.K."/>
            <person name="Shownkeen R."/>
            <person name="Sims S."/>
            <person name="Skuce C.D."/>
            <person name="Smith M.L."/>
            <person name="Soderlund C."/>
            <person name="Steward C.A."/>
            <person name="Sulston J.E."/>
            <person name="Swann R.M."/>
            <person name="Sycamore N."/>
            <person name="Taylor R."/>
            <person name="Tee L."/>
            <person name="Thomas D.W."/>
            <person name="Thorpe A."/>
            <person name="Tracey A."/>
            <person name="Tromans A.C."/>
            <person name="Vaudin M."/>
            <person name="Wall M."/>
            <person name="Wallis J.M."/>
            <person name="Whitehead S.L."/>
            <person name="Whittaker P."/>
            <person name="Willey D.L."/>
            <person name="Williams L."/>
            <person name="Williams S.A."/>
            <person name="Wilming L."/>
            <person name="Wray P.W."/>
            <person name="Hubbard T."/>
            <person name="Durbin R.M."/>
            <person name="Bentley D.R."/>
            <person name="Beck S."/>
            <person name="Rogers J."/>
        </authorList>
    </citation>
    <scope>NUCLEOTIDE SEQUENCE [LARGE SCALE GENOMIC DNA]</scope>
</reference>
<reference key="4">
    <citation type="submission" date="2005-09" db="EMBL/GenBank/DDBJ databases">
        <authorList>
            <person name="Mural R.J."/>
            <person name="Istrail S."/>
            <person name="Sutton G.G."/>
            <person name="Florea L."/>
            <person name="Halpern A.L."/>
            <person name="Mobarry C.M."/>
            <person name="Lippert R."/>
            <person name="Walenz B."/>
            <person name="Shatkay H."/>
            <person name="Dew I."/>
            <person name="Miller J.R."/>
            <person name="Flanigan M.J."/>
            <person name="Edwards N.J."/>
            <person name="Bolanos R."/>
            <person name="Fasulo D."/>
            <person name="Halldorsson B.V."/>
            <person name="Hannenhalli S."/>
            <person name="Turner R."/>
            <person name="Yooseph S."/>
            <person name="Lu F."/>
            <person name="Nusskern D.R."/>
            <person name="Shue B.C."/>
            <person name="Zheng X.H."/>
            <person name="Zhong F."/>
            <person name="Delcher A.L."/>
            <person name="Huson D.H."/>
            <person name="Kravitz S.A."/>
            <person name="Mouchard L."/>
            <person name="Reinert K."/>
            <person name="Remington K.A."/>
            <person name="Clark A.G."/>
            <person name="Waterman M.S."/>
            <person name="Eichler E.E."/>
            <person name="Adams M.D."/>
            <person name="Hunkapiller M.W."/>
            <person name="Myers E.W."/>
            <person name="Venter J.C."/>
        </authorList>
    </citation>
    <scope>NUCLEOTIDE SEQUENCE [LARGE SCALE GENOMIC DNA]</scope>
</reference>
<reference key="5">
    <citation type="journal article" date="2004" name="Genome Res.">
        <title>The status, quality, and expansion of the NIH full-length cDNA project: the Mammalian Gene Collection (MGC).</title>
        <authorList>
            <consortium name="The MGC Project Team"/>
        </authorList>
    </citation>
    <scope>NUCLEOTIDE SEQUENCE [LARGE SCALE MRNA] (ISOFORM 2)</scope>
    <source>
        <tissue>Brain</tissue>
    </source>
</reference>
<reference key="6">
    <citation type="journal article" date="2005" name="Gene">
        <title>Spef1, a conserved novel testis protein found in mouse sperm flagella.</title>
        <authorList>
            <person name="Chan S.W."/>
            <person name="Fowler K.J."/>
            <person name="Choo K.H.A."/>
            <person name="Kalitsis P."/>
        </authorList>
    </citation>
    <scope>ALTERNATIVE SPLICING</scope>
</reference>
<reference key="7">
    <citation type="submission" date="2007-08" db="PDB data bank">
        <title>Solution structure of the CH domain from human sperm flagellar protein 1.</title>
        <authorList>
            <consortium name="RIKEN structural genomics initiative (RSGI)"/>
        </authorList>
    </citation>
    <scope>STRUCTURE BY NMR OF 1-120</scope>
</reference>
<reference key="8">
    <citation type="journal article" date="2019" name="Gastroenterology">
        <title>Sperm Flagellar 1 Binds Actin in Intestinal Epithelial Cells and Contributes to Formation of Filopodia and Lamellipodia.</title>
        <authorList>
            <person name="Tapia R."/>
            <person name="Perez-Yepez E.A."/>
            <person name="Carlino M.J."/>
            <person name="Karandikar U.C."/>
            <person name="Kralicek S.E."/>
            <person name="Estes M.K."/>
            <person name="Hecht G.A."/>
        </authorList>
    </citation>
    <scope>FUNCTION</scope>
    <scope>SUBCELLULAR LOCATION</scope>
    <scope>TISSUE SPECIFICITY</scope>
    <scope>INTERACTION WITH ACTIN; TJP1; CGN AND CDH1</scope>
</reference>
<organism>
    <name type="scientific">Homo sapiens</name>
    <name type="common">Human</name>
    <dbReference type="NCBI Taxonomy" id="9606"/>
    <lineage>
        <taxon>Eukaryota</taxon>
        <taxon>Metazoa</taxon>
        <taxon>Chordata</taxon>
        <taxon>Craniata</taxon>
        <taxon>Vertebrata</taxon>
        <taxon>Euteleostomi</taxon>
        <taxon>Mammalia</taxon>
        <taxon>Eutheria</taxon>
        <taxon>Euarchontoglires</taxon>
        <taxon>Primates</taxon>
        <taxon>Haplorrhini</taxon>
        <taxon>Catarrhini</taxon>
        <taxon>Hominidae</taxon>
        <taxon>Homo</taxon>
    </lineage>
</organism>